<keyword id="KW-0963">Cytoplasm</keyword>
<keyword id="KW-0687">Ribonucleoprotein</keyword>
<keyword id="KW-0689">Ribosomal protein</keyword>
<comment type="function">
    <text evidence="1">Required for the assembly and/or stability of the 40S ribosomal subunit. Required for the processing of the 20S rRNA-precursor to mature 18S rRNA in a late step of the maturation of 40S ribosomal subunits.</text>
</comment>
<comment type="subunit">
    <text evidence="1">Component of the small ribosomal subunit. Mature ribosomes consist of a small (40S) and a large (60S) subunit. The 40S subunit contains about 33 different proteins and 1 molecule of RNA (18S). The 60S subunit contains about 49 different proteins and 3 molecules of RNA (25S, 5.8S and 5S). Interacts with ribosomal protein S21.</text>
</comment>
<comment type="subcellular location">
    <subcellularLocation>
        <location evidence="1">Cytoplasm</location>
    </subcellularLocation>
</comment>
<comment type="similarity">
    <text evidence="1">Belongs to the universal ribosomal protein uS2 family.</text>
</comment>
<dbReference type="EMBL" id="AM472018">
    <property type="protein sequence ID" value="CAN61790.1"/>
    <property type="molecule type" value="Genomic_DNA"/>
</dbReference>
<dbReference type="RefSeq" id="XP_002268664.1">
    <property type="nucleotide sequence ID" value="XM_002268628.4"/>
</dbReference>
<dbReference type="SMR" id="A5BUU4"/>
<dbReference type="PaxDb" id="29760-VIT_09s0002g00610.t01"/>
<dbReference type="EnsemblPlants" id="Vitvi09g00043_t001">
    <property type="protein sequence ID" value="Vitvi09g00043_P001"/>
    <property type="gene ID" value="Vitvi09g00043"/>
</dbReference>
<dbReference type="Gramene" id="Vitvi09g00043_t001">
    <property type="protein sequence ID" value="Vitvi09g00043_P001"/>
    <property type="gene ID" value="Vitvi09g00043"/>
</dbReference>
<dbReference type="eggNOG" id="KOG0830">
    <property type="taxonomic scope" value="Eukaryota"/>
</dbReference>
<dbReference type="HOGENOM" id="CLU_058171_0_0_1"/>
<dbReference type="OrthoDB" id="414863at2759"/>
<dbReference type="ExpressionAtlas" id="A5BUU4">
    <property type="expression patterns" value="baseline and differential"/>
</dbReference>
<dbReference type="GO" id="GO:0022627">
    <property type="term" value="C:cytosolic small ribosomal subunit"/>
    <property type="evidence" value="ECO:0007669"/>
    <property type="project" value="UniProtKB-UniRule"/>
</dbReference>
<dbReference type="GO" id="GO:0003735">
    <property type="term" value="F:structural constituent of ribosome"/>
    <property type="evidence" value="ECO:0007669"/>
    <property type="project" value="UniProtKB-UniRule"/>
</dbReference>
<dbReference type="GO" id="GO:0000028">
    <property type="term" value="P:ribosomal small subunit assembly"/>
    <property type="evidence" value="ECO:0007669"/>
    <property type="project" value="UniProtKB-UniRule"/>
</dbReference>
<dbReference type="GO" id="GO:0006412">
    <property type="term" value="P:translation"/>
    <property type="evidence" value="ECO:0007669"/>
    <property type="project" value="UniProtKB-UniRule"/>
</dbReference>
<dbReference type="CDD" id="cd01425">
    <property type="entry name" value="RPS2"/>
    <property type="match status" value="1"/>
</dbReference>
<dbReference type="FunFam" id="3.40.50.10490:FF:000017">
    <property type="entry name" value="40S ribosomal protein SA"/>
    <property type="match status" value="1"/>
</dbReference>
<dbReference type="Gene3D" id="3.40.50.10490">
    <property type="entry name" value="Glucose-6-phosphate isomerase like protein, domain 1"/>
    <property type="match status" value="1"/>
</dbReference>
<dbReference type="HAMAP" id="MF_03015">
    <property type="entry name" value="Ribosomal_S2_euk"/>
    <property type="match status" value="1"/>
</dbReference>
<dbReference type="InterPro" id="IPR001865">
    <property type="entry name" value="Ribosomal_uS2"/>
</dbReference>
<dbReference type="InterPro" id="IPR018130">
    <property type="entry name" value="Ribosomal_uS2_CS"/>
</dbReference>
<dbReference type="InterPro" id="IPR027498">
    <property type="entry name" value="Ribosomal_uS2_euk"/>
</dbReference>
<dbReference type="InterPro" id="IPR005707">
    <property type="entry name" value="Ribosomal_uS2_euk/arc"/>
</dbReference>
<dbReference type="InterPro" id="IPR023591">
    <property type="entry name" value="Ribosomal_uS2_flav_dom_sf"/>
</dbReference>
<dbReference type="NCBIfam" id="TIGR01012">
    <property type="entry name" value="uS2_euk_arch"/>
    <property type="match status" value="1"/>
</dbReference>
<dbReference type="PANTHER" id="PTHR11489">
    <property type="entry name" value="40S RIBOSOMAL PROTEIN SA"/>
    <property type="match status" value="1"/>
</dbReference>
<dbReference type="Pfam" id="PF00318">
    <property type="entry name" value="Ribosomal_S2"/>
    <property type="match status" value="2"/>
</dbReference>
<dbReference type="PRINTS" id="PR00395">
    <property type="entry name" value="RIBOSOMALS2"/>
</dbReference>
<dbReference type="SUPFAM" id="SSF52313">
    <property type="entry name" value="Ribosomal protein S2"/>
    <property type="match status" value="1"/>
</dbReference>
<dbReference type="PROSITE" id="PS00962">
    <property type="entry name" value="RIBOSOMAL_S2_1"/>
    <property type="match status" value="1"/>
</dbReference>
<dbReference type="PROSITE" id="PS00963">
    <property type="entry name" value="RIBOSOMAL_S2_2"/>
    <property type="match status" value="1"/>
</dbReference>
<evidence type="ECO:0000255" key="1">
    <source>
        <dbReference type="HAMAP-Rule" id="MF_03015"/>
    </source>
</evidence>
<evidence type="ECO:0000305" key="2"/>
<name>RSSA_VITVI</name>
<accession>A5BUU4</accession>
<accession>A7P6D1</accession>
<feature type="chain" id="PRO_0000371603" description="Small ribosomal subunit protein uS2">
    <location>
        <begin position="1"/>
        <end position="312"/>
    </location>
</feature>
<protein>
    <recommendedName>
        <fullName evidence="1">Small ribosomal subunit protein uS2</fullName>
    </recommendedName>
    <alternativeName>
        <fullName evidence="2">40S ribosomal protein SA</fullName>
    </alternativeName>
</protein>
<proteinExistence type="inferred from homology"/>
<reference key="1">
    <citation type="journal article" date="2007" name="Nature">
        <title>The grapevine genome sequence suggests ancestral hexaploidization in major angiosperm phyla.</title>
        <authorList>
            <person name="Jaillon O."/>
            <person name="Aury J.-M."/>
            <person name="Noel B."/>
            <person name="Policriti A."/>
            <person name="Clepet C."/>
            <person name="Casagrande A."/>
            <person name="Choisne N."/>
            <person name="Aubourg S."/>
            <person name="Vitulo N."/>
            <person name="Jubin C."/>
            <person name="Vezzi A."/>
            <person name="Legeai F."/>
            <person name="Hugueney P."/>
            <person name="Dasilva C."/>
            <person name="Horner D."/>
            <person name="Mica E."/>
            <person name="Jublot D."/>
            <person name="Poulain J."/>
            <person name="Bruyere C."/>
            <person name="Billault A."/>
            <person name="Segurens B."/>
            <person name="Gouyvenoux M."/>
            <person name="Ugarte E."/>
            <person name="Cattonaro F."/>
            <person name="Anthouard V."/>
            <person name="Vico V."/>
            <person name="Del Fabbro C."/>
            <person name="Alaux M."/>
            <person name="Di Gaspero G."/>
            <person name="Dumas V."/>
            <person name="Felice N."/>
            <person name="Paillard S."/>
            <person name="Juman I."/>
            <person name="Moroldo M."/>
            <person name="Scalabrin S."/>
            <person name="Canaguier A."/>
            <person name="Le Clainche I."/>
            <person name="Malacrida G."/>
            <person name="Durand E."/>
            <person name="Pesole G."/>
            <person name="Laucou V."/>
            <person name="Chatelet P."/>
            <person name="Merdinoglu D."/>
            <person name="Delledonne M."/>
            <person name="Pezzotti M."/>
            <person name="Lecharny A."/>
            <person name="Scarpelli C."/>
            <person name="Artiguenave F."/>
            <person name="Pe M.E."/>
            <person name="Valle G."/>
            <person name="Morgante M."/>
            <person name="Caboche M."/>
            <person name="Adam-Blondon A.-F."/>
            <person name="Weissenbach J."/>
            <person name="Quetier F."/>
            <person name="Wincker P."/>
        </authorList>
    </citation>
    <scope>NUCLEOTIDE SEQUENCE [LARGE SCALE GENOMIC DNA]</scope>
    <source>
        <strain>cv. Pinot noir / PN40024</strain>
    </source>
</reference>
<reference key="2">
    <citation type="journal article" date="2007" name="PLoS ONE">
        <title>A high quality draft consensus sequence of the genome of a heterozygous grapevine variety.</title>
        <authorList>
            <person name="Velasco R."/>
            <person name="Zharkikh A."/>
            <person name="Troggio M."/>
            <person name="Cartwright D.A."/>
            <person name="Cestaro A."/>
            <person name="Pruss D."/>
            <person name="Pindo M."/>
            <person name="FitzGerald L.M."/>
            <person name="Vezzulli S."/>
            <person name="Reid J."/>
            <person name="Malacarne G."/>
            <person name="Iliev D."/>
            <person name="Coppola G."/>
            <person name="Wardell B."/>
            <person name="Micheletti D."/>
            <person name="Macalma T."/>
            <person name="Facci M."/>
            <person name="Mitchell J.T."/>
            <person name="Perazzolli M."/>
            <person name="Eldredge G."/>
            <person name="Gatto P."/>
            <person name="Oyzerski R."/>
            <person name="Moretto M."/>
            <person name="Gutin N."/>
            <person name="Stefanini M."/>
            <person name="Chen Y."/>
            <person name="Segala C."/>
            <person name="Davenport C."/>
            <person name="Dematte L."/>
            <person name="Mraz A."/>
            <person name="Battilana J."/>
            <person name="Stormo K."/>
            <person name="Costa F."/>
            <person name="Tao Q."/>
            <person name="Si-Ammour A."/>
            <person name="Harkins T."/>
            <person name="Lackey A."/>
            <person name="Perbost C."/>
            <person name="Taillon B."/>
            <person name="Stella A."/>
            <person name="Solovyev V."/>
            <person name="Fawcett J.A."/>
            <person name="Sterck L."/>
            <person name="Vandepoele K."/>
            <person name="Grando S.M."/>
            <person name="Toppo S."/>
            <person name="Moser C."/>
            <person name="Lanchbury J."/>
            <person name="Bogden R."/>
            <person name="Skolnick M."/>
            <person name="Sgaramella V."/>
            <person name="Bhatnagar S.K."/>
            <person name="Fontana P."/>
            <person name="Gutin A."/>
            <person name="Van de Peer Y."/>
            <person name="Salamini F."/>
            <person name="Viola R."/>
        </authorList>
    </citation>
    <scope>NUCLEOTIDE SEQUENCE [LARGE SCALE GENOMIC DNA]</scope>
    <source>
        <strain>cv. Pinot noir</strain>
    </source>
</reference>
<gene>
    <name type="ORF">GSVIVT00034021001</name>
    <name type="ORF">LOC100254883</name>
    <name type="ORF">VITISV_015795</name>
</gene>
<sequence length="312" mass="33909">MATPTRALSQKEQDIQMMLAAEVHLGTKNCNFQMERYVFKRRNDGIYIINLGKTWEKLQLAARVIVAIENPKDIIVQSARPYGQRAVLKFAQYTGAHAIAGRHTPGTFTNQLQTSFSEPRLLILTDPRTDHQPIKEAALGNIPTIAFCDTDSPMRYVDIGIPANNKGKHSIGCLFWLLARMVLQMRRTIAPGHKWDVMVDLFFYREPEEPKEQEGDEVVAAPDYGITDYQATALGGLGGGDWGAPITDAPQWGADVPAVAPIPAVPGSNWGDAAPMPSAVPIATDGWDAAAAPPVAVPPPVVEGVPPPAGWE</sequence>
<organism>
    <name type="scientific">Vitis vinifera</name>
    <name type="common">Grape</name>
    <dbReference type="NCBI Taxonomy" id="29760"/>
    <lineage>
        <taxon>Eukaryota</taxon>
        <taxon>Viridiplantae</taxon>
        <taxon>Streptophyta</taxon>
        <taxon>Embryophyta</taxon>
        <taxon>Tracheophyta</taxon>
        <taxon>Spermatophyta</taxon>
        <taxon>Magnoliopsida</taxon>
        <taxon>eudicotyledons</taxon>
        <taxon>Gunneridae</taxon>
        <taxon>Pentapetalae</taxon>
        <taxon>rosids</taxon>
        <taxon>Vitales</taxon>
        <taxon>Vitaceae</taxon>
        <taxon>Viteae</taxon>
        <taxon>Vitis</taxon>
    </lineage>
</organism>